<name>RNPA_HELP2</name>
<accession>B6JNU5</accession>
<dbReference type="EC" id="3.1.26.5" evidence="1"/>
<dbReference type="EMBL" id="CP001217">
    <property type="protein sequence ID" value="ACJ08573.1"/>
    <property type="molecule type" value="Genomic_DNA"/>
</dbReference>
<dbReference type="SMR" id="B6JNU5"/>
<dbReference type="KEGG" id="hpp:HPP12_1425"/>
<dbReference type="HOGENOM" id="CLU_117179_9_3_7"/>
<dbReference type="Proteomes" id="UP000008198">
    <property type="component" value="Chromosome"/>
</dbReference>
<dbReference type="GO" id="GO:0030677">
    <property type="term" value="C:ribonuclease P complex"/>
    <property type="evidence" value="ECO:0007669"/>
    <property type="project" value="TreeGrafter"/>
</dbReference>
<dbReference type="GO" id="GO:0042781">
    <property type="term" value="F:3'-tRNA processing endoribonuclease activity"/>
    <property type="evidence" value="ECO:0007669"/>
    <property type="project" value="TreeGrafter"/>
</dbReference>
<dbReference type="GO" id="GO:0004526">
    <property type="term" value="F:ribonuclease P activity"/>
    <property type="evidence" value="ECO:0007669"/>
    <property type="project" value="UniProtKB-UniRule"/>
</dbReference>
<dbReference type="GO" id="GO:0000049">
    <property type="term" value="F:tRNA binding"/>
    <property type="evidence" value="ECO:0007669"/>
    <property type="project" value="UniProtKB-UniRule"/>
</dbReference>
<dbReference type="GO" id="GO:0001682">
    <property type="term" value="P:tRNA 5'-leader removal"/>
    <property type="evidence" value="ECO:0007669"/>
    <property type="project" value="UniProtKB-UniRule"/>
</dbReference>
<dbReference type="FunFam" id="3.30.230.10:FF:000143">
    <property type="entry name" value="Ribonuclease P protein component"/>
    <property type="match status" value="1"/>
</dbReference>
<dbReference type="Gene3D" id="3.30.230.10">
    <property type="match status" value="1"/>
</dbReference>
<dbReference type="HAMAP" id="MF_00227">
    <property type="entry name" value="RNase_P"/>
    <property type="match status" value="1"/>
</dbReference>
<dbReference type="InterPro" id="IPR020568">
    <property type="entry name" value="Ribosomal_Su5_D2-typ_SF"/>
</dbReference>
<dbReference type="InterPro" id="IPR014721">
    <property type="entry name" value="Ribsml_uS5_D2-typ_fold_subgr"/>
</dbReference>
<dbReference type="InterPro" id="IPR000100">
    <property type="entry name" value="RNase_P"/>
</dbReference>
<dbReference type="InterPro" id="IPR020539">
    <property type="entry name" value="RNase_P_CS"/>
</dbReference>
<dbReference type="NCBIfam" id="TIGR00188">
    <property type="entry name" value="rnpA"/>
    <property type="match status" value="1"/>
</dbReference>
<dbReference type="PANTHER" id="PTHR33992">
    <property type="entry name" value="RIBONUCLEASE P PROTEIN COMPONENT"/>
    <property type="match status" value="1"/>
</dbReference>
<dbReference type="PANTHER" id="PTHR33992:SF1">
    <property type="entry name" value="RIBONUCLEASE P PROTEIN COMPONENT"/>
    <property type="match status" value="1"/>
</dbReference>
<dbReference type="Pfam" id="PF00825">
    <property type="entry name" value="Ribonuclease_P"/>
    <property type="match status" value="1"/>
</dbReference>
<dbReference type="SUPFAM" id="SSF54211">
    <property type="entry name" value="Ribosomal protein S5 domain 2-like"/>
    <property type="match status" value="1"/>
</dbReference>
<dbReference type="PROSITE" id="PS00648">
    <property type="entry name" value="RIBONUCLEASE_P"/>
    <property type="match status" value="1"/>
</dbReference>
<keyword id="KW-0255">Endonuclease</keyword>
<keyword id="KW-0378">Hydrolase</keyword>
<keyword id="KW-0540">Nuclease</keyword>
<keyword id="KW-0694">RNA-binding</keyword>
<keyword id="KW-0819">tRNA processing</keyword>
<reference key="1">
    <citation type="submission" date="2008-10" db="EMBL/GenBank/DDBJ databases">
        <title>The complete genome sequence of Helicobacter pylori strain P12.</title>
        <authorList>
            <person name="Fischer W."/>
            <person name="Windhager L."/>
            <person name="Karnholz A."/>
            <person name="Zeiller M."/>
            <person name="Zimmer R."/>
            <person name="Haas R."/>
        </authorList>
    </citation>
    <scope>NUCLEOTIDE SEQUENCE [LARGE SCALE GENOMIC DNA]</scope>
    <source>
        <strain>P12</strain>
    </source>
</reference>
<proteinExistence type="inferred from homology"/>
<comment type="function">
    <text evidence="1">RNaseP catalyzes the removal of the 5'-leader sequence from pre-tRNA to produce the mature 5'-terminus. It can also cleave other RNA substrates such as 4.5S RNA. The protein component plays an auxiliary but essential role in vivo by binding to the 5'-leader sequence and broadening the substrate specificity of the ribozyme.</text>
</comment>
<comment type="catalytic activity">
    <reaction evidence="1">
        <text>Endonucleolytic cleavage of RNA, removing 5'-extranucleotides from tRNA precursor.</text>
        <dbReference type="EC" id="3.1.26.5"/>
    </reaction>
</comment>
<comment type="subunit">
    <text evidence="1">Consists of a catalytic RNA component (M1 or rnpB) and a protein subunit.</text>
</comment>
<comment type="similarity">
    <text evidence="1">Belongs to the RnpA family.</text>
</comment>
<gene>
    <name evidence="1" type="primary">rnpA</name>
    <name type="ordered locus">HPP12_1425</name>
</gene>
<protein>
    <recommendedName>
        <fullName evidence="1">Ribonuclease P protein component</fullName>
        <shortName evidence="1">RNase P protein</shortName>
        <shortName evidence="1">RNaseP protein</shortName>
        <ecNumber evidence="1">3.1.26.5</ecNumber>
    </recommendedName>
    <alternativeName>
        <fullName evidence="1">Protein C5</fullName>
    </alternativeName>
</protein>
<organism>
    <name type="scientific">Helicobacter pylori (strain P12)</name>
    <dbReference type="NCBI Taxonomy" id="570508"/>
    <lineage>
        <taxon>Bacteria</taxon>
        <taxon>Pseudomonadati</taxon>
        <taxon>Campylobacterota</taxon>
        <taxon>Epsilonproteobacteria</taxon>
        <taxon>Campylobacterales</taxon>
        <taxon>Helicobacteraceae</taxon>
        <taxon>Helicobacter</taxon>
    </lineage>
</organism>
<feature type="chain" id="PRO_1000100364" description="Ribonuclease P protein component">
    <location>
        <begin position="1"/>
        <end position="161"/>
    </location>
</feature>
<feature type="region of interest" description="Disordered" evidence="2">
    <location>
        <begin position="1"/>
        <end position="20"/>
    </location>
</feature>
<evidence type="ECO:0000255" key="1">
    <source>
        <dbReference type="HAMAP-Rule" id="MF_00227"/>
    </source>
</evidence>
<evidence type="ECO:0000256" key="2">
    <source>
        <dbReference type="SAM" id="MobiDB-lite"/>
    </source>
</evidence>
<sequence length="161" mass="18653">MPDELRAEKSFPSKPYDSLKNKSEFDKVYQKGFKKHNPFFSLFVLDLSKEPPKEKEGFKDPLSCRLKDKKALYLLGLSVSKKVGNAVKRNLIKRRLRSLTLKHAALCQGLALVFVPRSDCYHLDFWALEKHFLEMLTSIKNYMNKALKGLKKGMTHTYAKQ</sequence>